<name>YDZM_BACSU</name>
<accession>Q9K3A9</accession>
<comment type="subcellular location">
    <subcellularLocation>
        <location evidence="2">Cell membrane</location>
        <topology evidence="2">Multi-pass membrane protein</topology>
    </subcellularLocation>
</comment>
<sequence length="58" mass="6510">MNNKKNIFDIVMYIIFGVLSLFLVAKTDYGTGVLVFVAILYLAVIAYKIKQVFSNSDS</sequence>
<feature type="chain" id="PRO_0000380073" description="Uncharacterized membrane protein YdzM/YouB">
    <location>
        <begin position="1"/>
        <end position="58"/>
    </location>
</feature>
<feature type="transmembrane region" description="Helical" evidence="1">
    <location>
        <begin position="7"/>
        <end position="27"/>
    </location>
</feature>
<feature type="transmembrane region" description="Helical" evidence="1">
    <location>
        <begin position="29"/>
        <end position="49"/>
    </location>
</feature>
<keyword id="KW-1003">Cell membrane</keyword>
<keyword id="KW-0472">Membrane</keyword>
<keyword id="KW-1185">Reference proteome</keyword>
<keyword id="KW-0812">Transmembrane</keyword>
<keyword id="KW-1133">Transmembrane helix</keyword>
<evidence type="ECO:0000255" key="1"/>
<evidence type="ECO:0000305" key="2"/>
<organism>
    <name type="scientific">Bacillus subtilis (strain 168)</name>
    <dbReference type="NCBI Taxonomy" id="224308"/>
    <lineage>
        <taxon>Bacteria</taxon>
        <taxon>Bacillati</taxon>
        <taxon>Bacillota</taxon>
        <taxon>Bacilli</taxon>
        <taxon>Bacillales</taxon>
        <taxon>Bacillaceae</taxon>
        <taxon>Bacillus</taxon>
    </lineage>
</organism>
<reference key="1">
    <citation type="journal article" date="2000" name="Mol. Microbiol.">
        <title>Study of chromosome rearrangements associated with the trpE26 mutation of Bacillus subtilis.</title>
        <authorList>
            <person name="Regamey A."/>
            <person name="Lazarevic V."/>
            <person name="Hauser P."/>
            <person name="Karamata D."/>
        </authorList>
    </citation>
    <scope>NUCLEOTIDE SEQUENCE [GENOMIC DNA]</scope>
    <source>
        <strain>168</strain>
    </source>
</reference>
<reference key="2">
    <citation type="journal article" date="1997" name="Nature">
        <title>The complete genome sequence of the Gram-positive bacterium Bacillus subtilis.</title>
        <authorList>
            <person name="Kunst F."/>
            <person name="Ogasawara N."/>
            <person name="Moszer I."/>
            <person name="Albertini A.M."/>
            <person name="Alloni G."/>
            <person name="Azevedo V."/>
            <person name="Bertero M.G."/>
            <person name="Bessieres P."/>
            <person name="Bolotin A."/>
            <person name="Borchert S."/>
            <person name="Borriss R."/>
            <person name="Boursier L."/>
            <person name="Brans A."/>
            <person name="Braun M."/>
            <person name="Brignell S.C."/>
            <person name="Bron S."/>
            <person name="Brouillet S."/>
            <person name="Bruschi C.V."/>
            <person name="Caldwell B."/>
            <person name="Capuano V."/>
            <person name="Carter N.M."/>
            <person name="Choi S.-K."/>
            <person name="Codani J.-J."/>
            <person name="Connerton I.F."/>
            <person name="Cummings N.J."/>
            <person name="Daniel R.A."/>
            <person name="Denizot F."/>
            <person name="Devine K.M."/>
            <person name="Duesterhoeft A."/>
            <person name="Ehrlich S.D."/>
            <person name="Emmerson P.T."/>
            <person name="Entian K.-D."/>
            <person name="Errington J."/>
            <person name="Fabret C."/>
            <person name="Ferrari E."/>
            <person name="Foulger D."/>
            <person name="Fritz C."/>
            <person name="Fujita M."/>
            <person name="Fujita Y."/>
            <person name="Fuma S."/>
            <person name="Galizzi A."/>
            <person name="Galleron N."/>
            <person name="Ghim S.-Y."/>
            <person name="Glaser P."/>
            <person name="Goffeau A."/>
            <person name="Golightly E.J."/>
            <person name="Grandi G."/>
            <person name="Guiseppi G."/>
            <person name="Guy B.J."/>
            <person name="Haga K."/>
            <person name="Haiech J."/>
            <person name="Harwood C.R."/>
            <person name="Henaut A."/>
            <person name="Hilbert H."/>
            <person name="Holsappel S."/>
            <person name="Hosono S."/>
            <person name="Hullo M.-F."/>
            <person name="Itaya M."/>
            <person name="Jones L.-M."/>
            <person name="Joris B."/>
            <person name="Karamata D."/>
            <person name="Kasahara Y."/>
            <person name="Klaerr-Blanchard M."/>
            <person name="Klein C."/>
            <person name="Kobayashi Y."/>
            <person name="Koetter P."/>
            <person name="Koningstein G."/>
            <person name="Krogh S."/>
            <person name="Kumano M."/>
            <person name="Kurita K."/>
            <person name="Lapidus A."/>
            <person name="Lardinois S."/>
            <person name="Lauber J."/>
            <person name="Lazarevic V."/>
            <person name="Lee S.-M."/>
            <person name="Levine A."/>
            <person name="Liu H."/>
            <person name="Masuda S."/>
            <person name="Mauel C."/>
            <person name="Medigue C."/>
            <person name="Medina N."/>
            <person name="Mellado R.P."/>
            <person name="Mizuno M."/>
            <person name="Moestl D."/>
            <person name="Nakai S."/>
            <person name="Noback M."/>
            <person name="Noone D."/>
            <person name="O'Reilly M."/>
            <person name="Ogawa K."/>
            <person name="Ogiwara A."/>
            <person name="Oudega B."/>
            <person name="Park S.-H."/>
            <person name="Parro V."/>
            <person name="Pohl T.M."/>
            <person name="Portetelle D."/>
            <person name="Porwollik S."/>
            <person name="Prescott A.M."/>
            <person name="Presecan E."/>
            <person name="Pujic P."/>
            <person name="Purnelle B."/>
            <person name="Rapoport G."/>
            <person name="Rey M."/>
            <person name="Reynolds S."/>
            <person name="Rieger M."/>
            <person name="Rivolta C."/>
            <person name="Rocha E."/>
            <person name="Roche B."/>
            <person name="Rose M."/>
            <person name="Sadaie Y."/>
            <person name="Sato T."/>
            <person name="Scanlan E."/>
            <person name="Schleich S."/>
            <person name="Schroeter R."/>
            <person name="Scoffone F."/>
            <person name="Sekiguchi J."/>
            <person name="Sekowska A."/>
            <person name="Seror S.J."/>
            <person name="Serror P."/>
            <person name="Shin B.-S."/>
            <person name="Soldo B."/>
            <person name="Sorokin A."/>
            <person name="Tacconi E."/>
            <person name="Takagi T."/>
            <person name="Takahashi H."/>
            <person name="Takemaru K."/>
            <person name="Takeuchi M."/>
            <person name="Tamakoshi A."/>
            <person name="Tanaka T."/>
            <person name="Terpstra P."/>
            <person name="Tognoni A."/>
            <person name="Tosato V."/>
            <person name="Uchiyama S."/>
            <person name="Vandenbol M."/>
            <person name="Vannier F."/>
            <person name="Vassarotti A."/>
            <person name="Viari A."/>
            <person name="Wambutt R."/>
            <person name="Wedler E."/>
            <person name="Wedler H."/>
            <person name="Weitzenegger T."/>
            <person name="Winters P."/>
            <person name="Wipat A."/>
            <person name="Yamamoto H."/>
            <person name="Yamane K."/>
            <person name="Yasumoto K."/>
            <person name="Yata K."/>
            <person name="Yoshida K."/>
            <person name="Yoshikawa H.-F."/>
            <person name="Zumstein E."/>
            <person name="Yoshikawa H."/>
            <person name="Danchin A."/>
        </authorList>
    </citation>
    <scope>NUCLEOTIDE SEQUENCE [LARGE SCALE GENOMIC DNA]</scope>
    <source>
        <strain>168</strain>
    </source>
</reference>
<dbReference type="EMBL" id="AF029355">
    <property type="protein sequence ID" value="AAF76247.1"/>
    <property type="molecule type" value="Genomic_DNA"/>
</dbReference>
<dbReference type="EMBL" id="AF029356">
    <property type="protein sequence ID" value="AAF76249.1"/>
    <property type="molecule type" value="Genomic_DNA"/>
</dbReference>
<dbReference type="EMBL" id="AL009126">
    <property type="protein sequence ID" value="CAX52553.1"/>
    <property type="molecule type" value="Genomic_DNA"/>
</dbReference>
<dbReference type="EMBL" id="AL009126">
    <property type="protein sequence ID" value="CAX52649.1"/>
    <property type="molecule type" value="Genomic_DNA"/>
</dbReference>
<dbReference type="RefSeq" id="WP_009966645.1">
    <property type="nucleotide sequence ID" value="NZ_OZ025638.1"/>
</dbReference>
<dbReference type="RefSeq" id="YP_003097682.1">
    <property type="nucleotide sequence ID" value="NC_000964.3"/>
</dbReference>
<dbReference type="RefSeq" id="YP_003097752.1">
    <property type="nucleotide sequence ID" value="NC_000964.3"/>
</dbReference>
<dbReference type="SMR" id="Q9K3A9"/>
<dbReference type="STRING" id="224308.BSU05099"/>
<dbReference type="PaxDb" id="224308-BSU05099"/>
<dbReference type="EnsemblBacteria" id="CAX52553">
    <property type="protein sequence ID" value="CAX52553"/>
    <property type="gene ID" value="BSU_05099"/>
</dbReference>
<dbReference type="EnsemblBacteria" id="CAX52649">
    <property type="protein sequence ID" value="CAX52649"/>
    <property type="gene ID" value="BSU_21329"/>
</dbReference>
<dbReference type="GeneID" id="8303116"/>
<dbReference type="GeneID" id="8303141"/>
<dbReference type="KEGG" id="bsu:BSU05099"/>
<dbReference type="KEGG" id="bsu:BSU21329"/>
<dbReference type="PATRIC" id="fig|224308.179.peg.2328"/>
<dbReference type="InParanoid" id="Q9K3A9"/>
<dbReference type="OrthoDB" id="2914310at2"/>
<dbReference type="BioCyc" id="BSUB:BSU05099-MONOMER"/>
<dbReference type="BioCyc" id="BSUB:BSU21329-MONOMER"/>
<dbReference type="Proteomes" id="UP000001570">
    <property type="component" value="Chromosome"/>
</dbReference>
<dbReference type="GO" id="GO:0005886">
    <property type="term" value="C:plasma membrane"/>
    <property type="evidence" value="ECO:0007669"/>
    <property type="project" value="UniProtKB-SubCell"/>
</dbReference>
<protein>
    <recommendedName>
        <fullName>Uncharacterized membrane protein YdzM/YouB</fullName>
    </recommendedName>
</protein>
<proteinExistence type="predicted"/>
<gene>
    <name type="primary">ydzM</name>
    <name type="ordered locus">BSU05099</name>
</gene>
<gene>
    <name type="primary">youB</name>
    <name type="ordered locus">BSU21329</name>
</gene>